<proteinExistence type="inferred from homology"/>
<protein>
    <recommendedName>
        <fullName evidence="1">Undecaprenyl-diphosphatase</fullName>
        <ecNumber evidence="1">3.6.1.27</ecNumber>
    </recommendedName>
    <alternativeName>
        <fullName evidence="1">Bacitracin resistance protein</fullName>
    </alternativeName>
    <alternativeName>
        <fullName evidence="1">Undecaprenyl pyrophosphate phosphatase</fullName>
    </alternativeName>
</protein>
<feature type="chain" id="PRO_0000151184" description="Undecaprenyl-diphosphatase">
    <location>
        <begin position="1"/>
        <end position="293"/>
    </location>
</feature>
<feature type="transmembrane region" description="Helical" evidence="1">
    <location>
        <begin position="3"/>
        <end position="23"/>
    </location>
</feature>
<feature type="transmembrane region" description="Helical" evidence="1">
    <location>
        <begin position="43"/>
        <end position="63"/>
    </location>
</feature>
<feature type="transmembrane region" description="Helical" evidence="1">
    <location>
        <begin position="85"/>
        <end position="105"/>
    </location>
</feature>
<feature type="transmembrane region" description="Helical" evidence="1">
    <location>
        <begin position="109"/>
        <end position="129"/>
    </location>
</feature>
<feature type="transmembrane region" description="Helical" evidence="1">
    <location>
        <begin position="203"/>
        <end position="223"/>
    </location>
</feature>
<feature type="transmembrane region" description="Helical" evidence="1">
    <location>
        <begin position="238"/>
        <end position="258"/>
    </location>
</feature>
<feature type="transmembrane region" description="Helical" evidence="1">
    <location>
        <begin position="269"/>
        <end position="289"/>
    </location>
</feature>
<sequence length="293" mass="32256">MDIALAIKALILGIVEGLTEFLPISSTGHLILAGQLLDFNDEKGKIFEIVIQFGAILAVCWEFRHKIIDVIKGLPNDPRQQRFALNVIVATIPAITLALIFGKAIKAHLFNPIVVASAFIIGGLVILWAEWRERHRGQTHDPRGNALLEAAKAGAPRVETLDDLRLSDAFKVGLAQCFALIPGTSRSGSTIIGGLLFGLSRKVATEFSFFLAIPVIFGATVYELYKERALLSTDDLSIFGIGFVAAFISAFFCVRWLLRFIASHDFRGFAWYRIVFGVIVLVTAYTHLIAWQA</sequence>
<organism>
    <name type="scientific">Ralstonia nicotianae (strain ATCC BAA-1114 / GMI1000)</name>
    <name type="common">Ralstonia solanacearum</name>
    <dbReference type="NCBI Taxonomy" id="267608"/>
    <lineage>
        <taxon>Bacteria</taxon>
        <taxon>Pseudomonadati</taxon>
        <taxon>Pseudomonadota</taxon>
        <taxon>Betaproteobacteria</taxon>
        <taxon>Burkholderiales</taxon>
        <taxon>Burkholderiaceae</taxon>
        <taxon>Ralstonia</taxon>
        <taxon>Ralstonia solanacearum species complex</taxon>
    </lineage>
</organism>
<keyword id="KW-0046">Antibiotic resistance</keyword>
<keyword id="KW-0997">Cell inner membrane</keyword>
<keyword id="KW-1003">Cell membrane</keyword>
<keyword id="KW-0133">Cell shape</keyword>
<keyword id="KW-0961">Cell wall biogenesis/degradation</keyword>
<keyword id="KW-0378">Hydrolase</keyword>
<keyword id="KW-0472">Membrane</keyword>
<keyword id="KW-0573">Peptidoglycan synthesis</keyword>
<keyword id="KW-1185">Reference proteome</keyword>
<keyword id="KW-0812">Transmembrane</keyword>
<keyword id="KW-1133">Transmembrane helix</keyword>
<comment type="function">
    <text evidence="1">Catalyzes the dephosphorylation of undecaprenyl diphosphate (UPP). Confers resistance to bacitracin.</text>
</comment>
<comment type="catalytic activity">
    <reaction evidence="1">
        <text>di-trans,octa-cis-undecaprenyl diphosphate + H2O = di-trans,octa-cis-undecaprenyl phosphate + phosphate + H(+)</text>
        <dbReference type="Rhea" id="RHEA:28094"/>
        <dbReference type="ChEBI" id="CHEBI:15377"/>
        <dbReference type="ChEBI" id="CHEBI:15378"/>
        <dbReference type="ChEBI" id="CHEBI:43474"/>
        <dbReference type="ChEBI" id="CHEBI:58405"/>
        <dbReference type="ChEBI" id="CHEBI:60392"/>
        <dbReference type="EC" id="3.6.1.27"/>
    </reaction>
</comment>
<comment type="subcellular location">
    <subcellularLocation>
        <location evidence="1">Cell inner membrane</location>
        <topology evidence="1">Multi-pass membrane protein</topology>
    </subcellularLocation>
</comment>
<comment type="miscellaneous">
    <text>Bacitracin is thought to be involved in the inhibition of peptidoglycan synthesis by sequestering undecaprenyl diphosphate, thereby reducing the pool of lipid carrier available.</text>
</comment>
<comment type="similarity">
    <text evidence="1">Belongs to the UppP family.</text>
</comment>
<evidence type="ECO:0000255" key="1">
    <source>
        <dbReference type="HAMAP-Rule" id="MF_01006"/>
    </source>
</evidence>
<name>UPPP_RALN1</name>
<accession>Q8Y1I9</accession>
<dbReference type="EC" id="3.6.1.27" evidence="1"/>
<dbReference type="EMBL" id="AL646052">
    <property type="protein sequence ID" value="CAD14231.1"/>
    <property type="molecule type" value="Genomic_DNA"/>
</dbReference>
<dbReference type="RefSeq" id="WP_011000656.1">
    <property type="nucleotide sequence ID" value="NC_003295.1"/>
</dbReference>
<dbReference type="SMR" id="Q8Y1I9"/>
<dbReference type="STRING" id="267608.RSc0701"/>
<dbReference type="EnsemblBacteria" id="CAD14231">
    <property type="protein sequence ID" value="CAD14231"/>
    <property type="gene ID" value="RSc0701"/>
</dbReference>
<dbReference type="KEGG" id="rso:RSc0701"/>
<dbReference type="eggNOG" id="COG1968">
    <property type="taxonomic scope" value="Bacteria"/>
</dbReference>
<dbReference type="HOGENOM" id="CLU_060296_2_0_4"/>
<dbReference type="Proteomes" id="UP000001436">
    <property type="component" value="Chromosome"/>
</dbReference>
<dbReference type="GO" id="GO:0005886">
    <property type="term" value="C:plasma membrane"/>
    <property type="evidence" value="ECO:0007669"/>
    <property type="project" value="UniProtKB-SubCell"/>
</dbReference>
<dbReference type="GO" id="GO:0050380">
    <property type="term" value="F:undecaprenyl-diphosphatase activity"/>
    <property type="evidence" value="ECO:0007669"/>
    <property type="project" value="UniProtKB-UniRule"/>
</dbReference>
<dbReference type="GO" id="GO:0071555">
    <property type="term" value="P:cell wall organization"/>
    <property type="evidence" value="ECO:0007669"/>
    <property type="project" value="UniProtKB-KW"/>
</dbReference>
<dbReference type="GO" id="GO:0009252">
    <property type="term" value="P:peptidoglycan biosynthetic process"/>
    <property type="evidence" value="ECO:0007669"/>
    <property type="project" value="UniProtKB-KW"/>
</dbReference>
<dbReference type="GO" id="GO:0008360">
    <property type="term" value="P:regulation of cell shape"/>
    <property type="evidence" value="ECO:0007669"/>
    <property type="project" value="UniProtKB-KW"/>
</dbReference>
<dbReference type="GO" id="GO:0046677">
    <property type="term" value="P:response to antibiotic"/>
    <property type="evidence" value="ECO:0007669"/>
    <property type="project" value="UniProtKB-UniRule"/>
</dbReference>
<dbReference type="HAMAP" id="MF_01006">
    <property type="entry name" value="Undec_diphosphatase"/>
    <property type="match status" value="1"/>
</dbReference>
<dbReference type="InterPro" id="IPR003824">
    <property type="entry name" value="UppP"/>
</dbReference>
<dbReference type="NCBIfam" id="NF001389">
    <property type="entry name" value="PRK00281.1-2"/>
    <property type="match status" value="1"/>
</dbReference>
<dbReference type="NCBIfam" id="NF001390">
    <property type="entry name" value="PRK00281.1-4"/>
    <property type="match status" value="1"/>
</dbReference>
<dbReference type="NCBIfam" id="TIGR00753">
    <property type="entry name" value="undec_PP_bacA"/>
    <property type="match status" value="1"/>
</dbReference>
<dbReference type="PANTHER" id="PTHR30622">
    <property type="entry name" value="UNDECAPRENYL-DIPHOSPHATASE"/>
    <property type="match status" value="1"/>
</dbReference>
<dbReference type="PANTHER" id="PTHR30622:SF3">
    <property type="entry name" value="UNDECAPRENYL-DIPHOSPHATASE"/>
    <property type="match status" value="1"/>
</dbReference>
<dbReference type="Pfam" id="PF02673">
    <property type="entry name" value="BacA"/>
    <property type="match status" value="1"/>
</dbReference>
<gene>
    <name evidence="1" type="primary">uppP</name>
    <name type="synonym">bacA</name>
    <name type="synonym">upk</name>
    <name type="ordered locus">RSc0701</name>
    <name type="ORF">RS01606</name>
</gene>
<reference key="1">
    <citation type="journal article" date="2002" name="Nature">
        <title>Genome sequence of the plant pathogen Ralstonia solanacearum.</title>
        <authorList>
            <person name="Salanoubat M."/>
            <person name="Genin S."/>
            <person name="Artiguenave F."/>
            <person name="Gouzy J."/>
            <person name="Mangenot S."/>
            <person name="Arlat M."/>
            <person name="Billault A."/>
            <person name="Brottier P."/>
            <person name="Camus J.-C."/>
            <person name="Cattolico L."/>
            <person name="Chandler M."/>
            <person name="Choisne N."/>
            <person name="Claudel-Renard C."/>
            <person name="Cunnac S."/>
            <person name="Demange N."/>
            <person name="Gaspin C."/>
            <person name="Lavie M."/>
            <person name="Moisan A."/>
            <person name="Robert C."/>
            <person name="Saurin W."/>
            <person name="Schiex T."/>
            <person name="Siguier P."/>
            <person name="Thebault P."/>
            <person name="Whalen M."/>
            <person name="Wincker P."/>
            <person name="Levy M."/>
            <person name="Weissenbach J."/>
            <person name="Boucher C.A."/>
        </authorList>
    </citation>
    <scope>NUCLEOTIDE SEQUENCE [LARGE SCALE GENOMIC DNA]</scope>
    <source>
        <strain>ATCC BAA-1114 / GMI1000</strain>
    </source>
</reference>